<comment type="function">
    <text evidence="1">Required for protein translocation and folding in the endoplasmic reticulum (ER). Functions as a nucleotide exchange factor for the ER lumenal chaperone KAR2 (By similarity).</text>
</comment>
<comment type="subunit">
    <text evidence="1">Interacts with KAR2.</text>
</comment>
<comment type="subcellular location">
    <subcellularLocation>
        <location evidence="3">Endoplasmic reticulum lumen</location>
    </subcellularLocation>
</comment>
<comment type="similarity">
    <text evidence="4">Belongs to the SIL1 family.</text>
</comment>
<feature type="signal peptide" evidence="2">
    <location>
        <begin position="1"/>
        <end position="18"/>
    </location>
</feature>
<feature type="chain" id="PRO_0000223360" description="Nucleotide exchange factor SIL1">
    <location>
        <begin position="19"/>
        <end position="414"/>
    </location>
</feature>
<feature type="short sequence motif" description="Prevents secretion from ER" evidence="3">
    <location>
        <begin position="411"/>
        <end position="414"/>
    </location>
</feature>
<feature type="glycosylation site" description="N-linked (GlcNAc...) asparagine" evidence="2">
    <location>
        <position position="17"/>
    </location>
</feature>
<feature type="glycosylation site" description="N-linked (GlcNAc...) asparagine" evidence="2">
    <location>
        <position position="352"/>
    </location>
</feature>
<sequence length="414" mass="47067">MKFSVLVLLASYLVGVNSSIVDTSEELICPDPENPLDCYPKLFVPTNEWQTIKPGQDIPPGLHVRLNIDTLEKEAKLMSADEKDEPVQEVVVGGELQDHSREAITENLQKLHESKHPEVKQEHAHRTKVSQGDLSNFDAACSEIESFKPHESDVERLHLALDTLEELSHDIEFGVKLTSDKAIFQSLVNIANGASDPKITEKVYRVMGSSLRNNPEAISNILTNFDKSYVDNLFEQLANENDVLQKRILGIIQALVQNSHFVRQYFSFDHSSGLNDLIAIFPKLGPNSKSRASNILEDLQLFPVTNDRRSLEDQDPESQVSKFIQNSFVGNKLDEKNFKSYFDQLVNLHQSNKSLRPSGDFLNWLAEEVESRKENKKRDDYSQEDKDFDEYMLRARHEVFGNPMGLRKAIADEL</sequence>
<accession>Q5A360</accession>
<accession>A0A1D8PTR0</accession>
<keyword id="KW-0256">Endoplasmic reticulum</keyword>
<keyword id="KW-0325">Glycoprotein</keyword>
<keyword id="KW-0653">Protein transport</keyword>
<keyword id="KW-1185">Reference proteome</keyword>
<keyword id="KW-0732">Signal</keyword>
<keyword id="KW-0811">Translocation</keyword>
<keyword id="KW-0813">Transport</keyword>
<evidence type="ECO:0000250" key="1"/>
<evidence type="ECO:0000255" key="2"/>
<evidence type="ECO:0000255" key="3">
    <source>
        <dbReference type="PROSITE-ProRule" id="PRU10138"/>
    </source>
</evidence>
<evidence type="ECO:0000305" key="4"/>
<proteinExistence type="inferred from homology"/>
<dbReference type="EMBL" id="CP017630">
    <property type="protein sequence ID" value="AOW31516.1"/>
    <property type="molecule type" value="Genomic_DNA"/>
</dbReference>
<dbReference type="RefSeq" id="XP_716242.1">
    <property type="nucleotide sequence ID" value="XM_711149.1"/>
</dbReference>
<dbReference type="SMR" id="Q5A360"/>
<dbReference type="FunCoup" id="Q5A360">
    <property type="interactions" value="162"/>
</dbReference>
<dbReference type="STRING" id="237561.Q5A360"/>
<dbReference type="GlyCosmos" id="Q5A360">
    <property type="glycosylation" value="2 sites, No reported glycans"/>
</dbReference>
<dbReference type="EnsemblFungi" id="CR_08350W_A-T">
    <property type="protein sequence ID" value="CR_08350W_A-T-p1"/>
    <property type="gene ID" value="CR_08350W_A"/>
</dbReference>
<dbReference type="GeneID" id="3642082"/>
<dbReference type="KEGG" id="cal:CAALFM_CR08350WA"/>
<dbReference type="CGD" id="CAL0000176393">
    <property type="gene designation" value="orf19.13761"/>
</dbReference>
<dbReference type="VEuPathDB" id="FungiDB:CR_08350W_A"/>
<dbReference type="eggNOG" id="KOG2160">
    <property type="taxonomic scope" value="Eukaryota"/>
</dbReference>
<dbReference type="HOGENOM" id="CLU_034955_0_0_1"/>
<dbReference type="InParanoid" id="Q5A360"/>
<dbReference type="OrthoDB" id="448649at2759"/>
<dbReference type="PRO" id="PR:Q5A360"/>
<dbReference type="Proteomes" id="UP000000559">
    <property type="component" value="Chromosome R"/>
</dbReference>
<dbReference type="GO" id="GO:0005783">
    <property type="term" value="C:endoplasmic reticulum"/>
    <property type="evidence" value="ECO:0000318"/>
    <property type="project" value="GO_Central"/>
</dbReference>
<dbReference type="GO" id="GO:0005788">
    <property type="term" value="C:endoplasmic reticulum lumen"/>
    <property type="evidence" value="ECO:0007669"/>
    <property type="project" value="UniProtKB-SubCell"/>
</dbReference>
<dbReference type="GO" id="GO:0000774">
    <property type="term" value="F:adenyl-nucleotide exchange factor activity"/>
    <property type="evidence" value="ECO:0000318"/>
    <property type="project" value="GO_Central"/>
</dbReference>
<dbReference type="GO" id="GO:0015031">
    <property type="term" value="P:protein transport"/>
    <property type="evidence" value="ECO:0007669"/>
    <property type="project" value="UniProtKB-KW"/>
</dbReference>
<dbReference type="FunFam" id="1.25.10.10:FF:001350">
    <property type="entry name" value="ER chaperone/ER translocation nucleotide exchange factor, putative"/>
    <property type="match status" value="1"/>
</dbReference>
<dbReference type="Gene3D" id="1.25.10.10">
    <property type="entry name" value="Leucine-rich Repeat Variant"/>
    <property type="match status" value="1"/>
</dbReference>
<dbReference type="InterPro" id="IPR011989">
    <property type="entry name" value="ARM-like"/>
</dbReference>
<dbReference type="InterPro" id="IPR016024">
    <property type="entry name" value="ARM-type_fold"/>
</dbReference>
<dbReference type="InterPro" id="IPR050693">
    <property type="entry name" value="Hsp70_NEF-Inhibitors"/>
</dbReference>
<dbReference type="InterPro" id="IPR031884">
    <property type="entry name" value="Sil1_fungi"/>
</dbReference>
<dbReference type="PANTHER" id="PTHR19316:SF34">
    <property type="entry name" value="NUCLEOTIDE EXCHANGE FACTOR SIL1"/>
    <property type="match status" value="1"/>
</dbReference>
<dbReference type="PANTHER" id="PTHR19316">
    <property type="entry name" value="PROTEIN FOLDING REGULATOR"/>
    <property type="match status" value="1"/>
</dbReference>
<dbReference type="Pfam" id="PF16782">
    <property type="entry name" value="SIL1"/>
    <property type="match status" value="1"/>
</dbReference>
<dbReference type="SUPFAM" id="SSF48371">
    <property type="entry name" value="ARM repeat"/>
    <property type="match status" value="1"/>
</dbReference>
<dbReference type="PROSITE" id="PS00014">
    <property type="entry name" value="ER_TARGET"/>
    <property type="match status" value="1"/>
</dbReference>
<reference key="1">
    <citation type="journal article" date="2004" name="Proc. Natl. Acad. Sci. U.S.A.">
        <title>The diploid genome sequence of Candida albicans.</title>
        <authorList>
            <person name="Jones T."/>
            <person name="Federspiel N.A."/>
            <person name="Chibana H."/>
            <person name="Dungan J."/>
            <person name="Kalman S."/>
            <person name="Magee B.B."/>
            <person name="Newport G."/>
            <person name="Thorstenson Y.R."/>
            <person name="Agabian N."/>
            <person name="Magee P.T."/>
            <person name="Davis R.W."/>
            <person name="Scherer S."/>
        </authorList>
    </citation>
    <scope>NUCLEOTIDE SEQUENCE [LARGE SCALE GENOMIC DNA]</scope>
    <source>
        <strain>SC5314 / ATCC MYA-2876</strain>
    </source>
</reference>
<reference key="2">
    <citation type="journal article" date="2007" name="Genome Biol.">
        <title>Assembly of the Candida albicans genome into sixteen supercontigs aligned on the eight chromosomes.</title>
        <authorList>
            <person name="van het Hoog M."/>
            <person name="Rast T.J."/>
            <person name="Martchenko M."/>
            <person name="Grindle S."/>
            <person name="Dignard D."/>
            <person name="Hogues H."/>
            <person name="Cuomo C."/>
            <person name="Berriman M."/>
            <person name="Scherer S."/>
            <person name="Magee B.B."/>
            <person name="Whiteway M."/>
            <person name="Chibana H."/>
            <person name="Nantel A."/>
            <person name="Magee P.T."/>
        </authorList>
    </citation>
    <scope>GENOME REANNOTATION</scope>
    <source>
        <strain>SC5314 / ATCC MYA-2876</strain>
    </source>
</reference>
<reference key="3">
    <citation type="journal article" date="2013" name="Genome Biol.">
        <title>Assembly of a phased diploid Candida albicans genome facilitates allele-specific measurements and provides a simple model for repeat and indel structure.</title>
        <authorList>
            <person name="Muzzey D."/>
            <person name="Schwartz K."/>
            <person name="Weissman J.S."/>
            <person name="Sherlock G."/>
        </authorList>
    </citation>
    <scope>NUCLEOTIDE SEQUENCE [LARGE SCALE GENOMIC DNA]</scope>
    <scope>GENOME REANNOTATION</scope>
    <source>
        <strain>SC5314 / ATCC MYA-2876</strain>
    </source>
</reference>
<gene>
    <name type="primary">SIL1</name>
    <name type="ordered locus">CAALFM_CR08350WA</name>
    <name type="ORF">CaO19.13761</name>
    <name type="ORF">CaO19.6403</name>
</gene>
<protein>
    <recommendedName>
        <fullName>Nucleotide exchange factor SIL1</fullName>
    </recommendedName>
</protein>
<name>SIL1_CANAL</name>
<organism>
    <name type="scientific">Candida albicans (strain SC5314 / ATCC MYA-2876)</name>
    <name type="common">Yeast</name>
    <dbReference type="NCBI Taxonomy" id="237561"/>
    <lineage>
        <taxon>Eukaryota</taxon>
        <taxon>Fungi</taxon>
        <taxon>Dikarya</taxon>
        <taxon>Ascomycota</taxon>
        <taxon>Saccharomycotina</taxon>
        <taxon>Pichiomycetes</taxon>
        <taxon>Debaryomycetaceae</taxon>
        <taxon>Candida/Lodderomyces clade</taxon>
        <taxon>Candida</taxon>
    </lineage>
</organism>